<accession>Q68A93</accession>
<protein>
    <recommendedName>
        <fullName>C-C motif chemokine 25</fullName>
    </recommendedName>
    <alternativeName>
        <fullName>Small-inducible cytokine A25</fullName>
    </alternativeName>
</protein>
<sequence>MNLWLLVCLVASLMGAWSTVHTQGVSEDCCLAYHHRARPRLLMRAQGYQRQEVSGSCNLPAVIFFFPKNKMLCVNPRVNWLPNVFKFLDNRNNTHSKQHLGSRRNLQDSHLGGQRSNTGMSRLAHSKSKSSRSTRSNKKKTSFLNMANPGP</sequence>
<feature type="signal peptide" evidence="2">
    <location>
        <begin position="1"/>
        <end position="22"/>
    </location>
</feature>
<feature type="chain" id="PRO_0000005234" description="C-C motif chemokine 25">
    <location>
        <begin position="23"/>
        <end position="151"/>
    </location>
</feature>
<feature type="region of interest" description="Disordered" evidence="3">
    <location>
        <begin position="94"/>
        <end position="151"/>
    </location>
</feature>
<feature type="compositionally biased region" description="Basic residues" evidence="3">
    <location>
        <begin position="124"/>
        <end position="141"/>
    </location>
</feature>
<feature type="disulfide bond" evidence="1">
    <location>
        <begin position="29"/>
        <end position="57"/>
    </location>
</feature>
<feature type="disulfide bond" evidence="1">
    <location>
        <begin position="30"/>
        <end position="73"/>
    </location>
</feature>
<gene>
    <name type="primary">CCL25</name>
</gene>
<name>CCL25_CANLF</name>
<reference key="1">
    <citation type="submission" date="2004-03" db="EMBL/GenBank/DDBJ databases">
        <title>Expression analysis of gene in canine atopic dermatitis.</title>
        <authorList>
            <person name="Tsukui T."/>
            <person name="Sakaguchi M."/>
            <person name="Maeda S."/>
            <person name="Koyanagi M."/>
            <person name="Masuda K."/>
            <person name="Ohno K."/>
            <person name="Tsujimoto H."/>
            <person name="Iwabuchi S."/>
        </authorList>
    </citation>
    <scope>NUCLEOTIDE SEQUENCE [MRNA]</scope>
</reference>
<dbReference type="EMBL" id="AB164617">
    <property type="protein sequence ID" value="BAD42446.1"/>
    <property type="molecule type" value="mRNA"/>
</dbReference>
<dbReference type="RefSeq" id="NP_001005259.1">
    <property type="nucleotide sequence ID" value="NM_001005259.1"/>
</dbReference>
<dbReference type="RefSeq" id="XP_005632371.1">
    <property type="nucleotide sequence ID" value="XM_005632314.2"/>
</dbReference>
<dbReference type="RefSeq" id="XP_005632372.1">
    <property type="nucleotide sequence ID" value="XM_005632315.2"/>
</dbReference>
<dbReference type="RefSeq" id="XP_013977206.1">
    <property type="nucleotide sequence ID" value="XM_014121731.1"/>
</dbReference>
<dbReference type="RefSeq" id="XP_038282317.1">
    <property type="nucleotide sequence ID" value="XM_038426389.1"/>
</dbReference>
<dbReference type="RefSeq" id="XP_038282318.1">
    <property type="nucleotide sequence ID" value="XM_038426390.1"/>
</dbReference>
<dbReference type="RefSeq" id="XP_038282319.1">
    <property type="nucleotide sequence ID" value="XM_038426391.1"/>
</dbReference>
<dbReference type="RefSeq" id="XP_038282320.1">
    <property type="nucleotide sequence ID" value="XM_038426392.1"/>
</dbReference>
<dbReference type="RefSeq" id="XP_038282321.1">
    <property type="nucleotide sequence ID" value="XM_038426393.1"/>
</dbReference>
<dbReference type="RefSeq" id="XP_038282322.1">
    <property type="nucleotide sequence ID" value="XM_038426394.1"/>
</dbReference>
<dbReference type="RefSeq" id="XP_038282323.1">
    <property type="nucleotide sequence ID" value="XM_038426395.1"/>
</dbReference>
<dbReference type="RefSeq" id="XP_038282324.1">
    <property type="nucleotide sequence ID" value="XM_038426396.1"/>
</dbReference>
<dbReference type="RefSeq" id="XP_038282325.1">
    <property type="nucleotide sequence ID" value="XM_038426397.1"/>
</dbReference>
<dbReference type="SMR" id="Q68A93"/>
<dbReference type="FunCoup" id="Q68A93">
    <property type="interactions" value="226"/>
</dbReference>
<dbReference type="STRING" id="9615.ENSCAFP00000027121"/>
<dbReference type="PaxDb" id="9612-ENSCAFP00000027121"/>
<dbReference type="Ensembl" id="ENSCAFT00030026204.1">
    <property type="protein sequence ID" value="ENSCAFP00030022881.1"/>
    <property type="gene ID" value="ENSCAFG00030014118.1"/>
</dbReference>
<dbReference type="Ensembl" id="ENSCAFT00040037911.1">
    <property type="protein sequence ID" value="ENSCAFP00040033045.1"/>
    <property type="gene ID" value="ENSCAFG00040020493.1"/>
</dbReference>
<dbReference type="GeneID" id="448798"/>
<dbReference type="KEGG" id="cfa:448798"/>
<dbReference type="CTD" id="6370"/>
<dbReference type="eggNOG" id="ENOG502S8D1">
    <property type="taxonomic scope" value="Eukaryota"/>
</dbReference>
<dbReference type="HOGENOM" id="CLU_113773_0_0_1"/>
<dbReference type="InParanoid" id="Q68A93"/>
<dbReference type="OMA" id="RAWAYRI"/>
<dbReference type="OrthoDB" id="9930747at2759"/>
<dbReference type="TreeFam" id="TF353160"/>
<dbReference type="Reactome" id="R-CFA-380108">
    <property type="pathway name" value="Chemokine receptors bind chemokines"/>
</dbReference>
<dbReference type="Reactome" id="R-CFA-418594">
    <property type="pathway name" value="G alpha (i) signalling events"/>
</dbReference>
<dbReference type="Proteomes" id="UP000002254">
    <property type="component" value="Unplaced"/>
</dbReference>
<dbReference type="Proteomes" id="UP000694429">
    <property type="component" value="Chromosome 20"/>
</dbReference>
<dbReference type="Proteomes" id="UP000694542">
    <property type="component" value="Chromosome 20"/>
</dbReference>
<dbReference type="Proteomes" id="UP000805418">
    <property type="component" value="Unplaced"/>
</dbReference>
<dbReference type="GO" id="GO:0005615">
    <property type="term" value="C:extracellular space"/>
    <property type="evidence" value="ECO:0000318"/>
    <property type="project" value="GO_Central"/>
</dbReference>
<dbReference type="GO" id="GO:0048020">
    <property type="term" value="F:CCR chemokine receptor binding"/>
    <property type="evidence" value="ECO:0000318"/>
    <property type="project" value="GO_Central"/>
</dbReference>
<dbReference type="GO" id="GO:0008009">
    <property type="term" value="F:chemokine activity"/>
    <property type="evidence" value="ECO:0000318"/>
    <property type="project" value="GO_Central"/>
</dbReference>
<dbReference type="GO" id="GO:0042379">
    <property type="term" value="F:chemokine receptor binding"/>
    <property type="evidence" value="ECO:0000250"/>
    <property type="project" value="UniProtKB"/>
</dbReference>
<dbReference type="GO" id="GO:0061844">
    <property type="term" value="P:antimicrobial humoral immune response mediated by antimicrobial peptide"/>
    <property type="evidence" value="ECO:0000318"/>
    <property type="project" value="GO_Central"/>
</dbReference>
<dbReference type="GO" id="GO:0070098">
    <property type="term" value="P:chemokine-mediated signaling pathway"/>
    <property type="evidence" value="ECO:0000318"/>
    <property type="project" value="GO_Central"/>
</dbReference>
<dbReference type="GO" id="GO:0048245">
    <property type="term" value="P:eosinophil chemotaxis"/>
    <property type="evidence" value="ECO:0000318"/>
    <property type="project" value="GO_Central"/>
</dbReference>
<dbReference type="GO" id="GO:0006954">
    <property type="term" value="P:inflammatory response"/>
    <property type="evidence" value="ECO:0000318"/>
    <property type="project" value="GO_Central"/>
</dbReference>
<dbReference type="GO" id="GO:0030335">
    <property type="term" value="P:positive regulation of cell migration"/>
    <property type="evidence" value="ECO:0000318"/>
    <property type="project" value="GO_Central"/>
</dbReference>
<dbReference type="Gene3D" id="2.40.50.40">
    <property type="match status" value="1"/>
</dbReference>
<dbReference type="InterPro" id="IPR039809">
    <property type="entry name" value="Chemokine_b/g/d"/>
</dbReference>
<dbReference type="InterPro" id="IPR000827">
    <property type="entry name" value="Chemokine_CC_CS"/>
</dbReference>
<dbReference type="InterPro" id="IPR001811">
    <property type="entry name" value="Chemokine_IL8-like_dom"/>
</dbReference>
<dbReference type="InterPro" id="IPR036048">
    <property type="entry name" value="Interleukin_8-like_sf"/>
</dbReference>
<dbReference type="PANTHER" id="PTHR12015:SF70">
    <property type="entry name" value="C-C MOTIF CHEMOKINE 25"/>
    <property type="match status" value="1"/>
</dbReference>
<dbReference type="PANTHER" id="PTHR12015">
    <property type="entry name" value="SMALL INDUCIBLE CYTOKINE A"/>
    <property type="match status" value="1"/>
</dbReference>
<dbReference type="Pfam" id="PF00048">
    <property type="entry name" value="IL8"/>
    <property type="match status" value="1"/>
</dbReference>
<dbReference type="SMART" id="SM00199">
    <property type="entry name" value="SCY"/>
    <property type="match status" value="1"/>
</dbReference>
<dbReference type="SUPFAM" id="SSF54117">
    <property type="entry name" value="Interleukin 8-like chemokines"/>
    <property type="match status" value="1"/>
</dbReference>
<dbReference type="PROSITE" id="PS00472">
    <property type="entry name" value="SMALL_CYTOKINES_CC"/>
    <property type="match status" value="1"/>
</dbReference>
<proteinExistence type="evidence at transcript level"/>
<organism>
    <name type="scientific">Canis lupus familiaris</name>
    <name type="common">Dog</name>
    <name type="synonym">Canis familiaris</name>
    <dbReference type="NCBI Taxonomy" id="9615"/>
    <lineage>
        <taxon>Eukaryota</taxon>
        <taxon>Metazoa</taxon>
        <taxon>Chordata</taxon>
        <taxon>Craniata</taxon>
        <taxon>Vertebrata</taxon>
        <taxon>Euteleostomi</taxon>
        <taxon>Mammalia</taxon>
        <taxon>Eutheria</taxon>
        <taxon>Laurasiatheria</taxon>
        <taxon>Carnivora</taxon>
        <taxon>Caniformia</taxon>
        <taxon>Canidae</taxon>
        <taxon>Canis</taxon>
    </lineage>
</organism>
<keyword id="KW-0145">Chemotaxis</keyword>
<keyword id="KW-0202">Cytokine</keyword>
<keyword id="KW-1015">Disulfide bond</keyword>
<keyword id="KW-0395">Inflammatory response</keyword>
<keyword id="KW-1185">Reference proteome</keyword>
<keyword id="KW-0964">Secreted</keyword>
<keyword id="KW-0732">Signal</keyword>
<evidence type="ECO:0000250" key="1"/>
<evidence type="ECO:0000255" key="2"/>
<evidence type="ECO:0000256" key="3">
    <source>
        <dbReference type="SAM" id="MobiDB-lite"/>
    </source>
</evidence>
<evidence type="ECO:0000305" key="4"/>
<comment type="function">
    <text evidence="1">Potentially involved in T-cell development. Recombinant protein shows chemotactic activity on thymocytes, macrophages, THP-1 cells, and dendritics cells but is inactive on peripheral blood lymphocytes and neutrophils. Binds to CCR9. Binds to atypical chemokine receptor ACKR4 and mediates the recruitment of beta-arrestin (ARRB1/2) to ACKR4 (By similarity).</text>
</comment>
<comment type="subcellular location">
    <subcellularLocation>
        <location evidence="1">Secreted</location>
    </subcellularLocation>
</comment>
<comment type="similarity">
    <text evidence="4">Belongs to the intercrine beta (chemokine CC) family.</text>
</comment>